<keyword id="KW-0067">ATP-binding</keyword>
<keyword id="KW-0963">Cytoplasm</keyword>
<keyword id="KW-0547">Nucleotide-binding</keyword>
<keyword id="KW-0614">Plasmid</keyword>
<keyword id="KW-1185">Reference proteome</keyword>
<sequence>MSSPNLAHPPTDYTGIVLFPRELSQFFMGDAGETLLINGAPGTGKTLFTIRGLDVLDRDSDVLYVSTRVDQETVHEMYFADHSSLDTTAILDLFQDPFELPLDVDVPFEKLDLDSLLEWIQEINAATTQLTIAFDSWELIYEYLAVRHDDPPDIKTVTNQLAVLAREENIRLMLVTETAAPSSLEYIVDGVVTLQVKEDDRGRTRRDLRLDKLRGVRIGNRLQPFTLADGQFQVITPVELLTIQTGTGNGTWDPLANSKAKFSTGIRDLDRILSGGYNRGSVVHLDLGPDLSRDAWSVLTLPTIRNFLSQEMGVAVVPPREGSPGLLHNDLNTVLSSQVFDTYCHVFETYAGPSDSADRYDQPDSTESFSEMATTTPPDDAPTATHETDGADDGSRSTDGVTGSDQPHPIDEDFESPIEGGQLAYEPYMAYVEQVREESEDPLLHVISMDTAQEAFETRLGDFANYVALHNDLTLLITKQGTELRTRADRVADMHFRLERSGDAIILYGENPLTPLLGIGISQSESIPKITLTEMV</sequence>
<protein>
    <recommendedName>
        <fullName evidence="12">Protein GvpD1</fullName>
    </recommendedName>
</protein>
<dbReference type="EMBL" id="X15374">
    <property type="protein sequence ID" value="CAA33435.1"/>
    <property type="molecule type" value="Genomic_DNA"/>
</dbReference>
<dbReference type="EMBL" id="M58557">
    <property type="protein sequence ID" value="AAA98195.1"/>
    <property type="molecule type" value="Genomic_DNA"/>
</dbReference>
<dbReference type="EMBL" id="X55648">
    <property type="protein sequence ID" value="CAA39171.1"/>
    <property type="molecule type" value="Genomic_DNA"/>
</dbReference>
<dbReference type="EMBL" id="AF016485">
    <property type="protein sequence ID" value="AAC82808.1"/>
    <property type="molecule type" value="Genomic_DNA"/>
</dbReference>
<dbReference type="EMBL" id="AE004438">
    <property type="protein sequence ID" value="AAG20725.1"/>
    <property type="molecule type" value="Genomic_DNA"/>
</dbReference>
<dbReference type="PIR" id="T08241">
    <property type="entry name" value="T08241"/>
</dbReference>
<dbReference type="RefSeq" id="WP_010890520.1">
    <property type="nucleotide sequence ID" value="NC_001869.1"/>
</dbReference>
<dbReference type="GeneID" id="5954619"/>
<dbReference type="KEGG" id="hal:gvpD"/>
<dbReference type="KEGG" id="hal:VNG_6028G"/>
<dbReference type="PATRIC" id="fig|64091.14.peg.2098"/>
<dbReference type="HOGENOM" id="CLU_047518_0_0_2"/>
<dbReference type="InParanoid" id="P13043"/>
<dbReference type="OrthoDB" id="49590at2157"/>
<dbReference type="Proteomes" id="UP000000554">
    <property type="component" value="Plasmid pNRC100"/>
</dbReference>
<dbReference type="Proteomes" id="UP000000554">
    <property type="component" value="Plasmid pNRC200"/>
</dbReference>
<dbReference type="GO" id="GO:0005737">
    <property type="term" value="C:cytoplasm"/>
    <property type="evidence" value="ECO:0007669"/>
    <property type="project" value="UniProtKB-SubCell"/>
</dbReference>
<dbReference type="GO" id="GO:0005524">
    <property type="term" value="F:ATP binding"/>
    <property type="evidence" value="ECO:0007669"/>
    <property type="project" value="UniProtKB-KW"/>
</dbReference>
<dbReference type="Gene3D" id="3.40.50.300">
    <property type="entry name" value="P-loop containing nucleotide triphosphate hydrolases"/>
    <property type="match status" value="1"/>
</dbReference>
<dbReference type="InterPro" id="IPR046777">
    <property type="entry name" value="GvpD_bR2"/>
</dbReference>
<dbReference type="InterPro" id="IPR009788">
    <property type="entry name" value="GvpD_P-loop"/>
</dbReference>
<dbReference type="InterPro" id="IPR027417">
    <property type="entry name" value="P-loop_NTPase"/>
</dbReference>
<dbReference type="PANTHER" id="PTHR43637:SF2">
    <property type="entry name" value="PROTEIN GVPD 1"/>
    <property type="match status" value="1"/>
</dbReference>
<dbReference type="PANTHER" id="PTHR43637">
    <property type="entry name" value="UPF0273 PROTEIN TM_0370"/>
    <property type="match status" value="1"/>
</dbReference>
<dbReference type="Pfam" id="PF20440">
    <property type="entry name" value="GvpD_bR2"/>
    <property type="match status" value="1"/>
</dbReference>
<dbReference type="Pfam" id="PF07088">
    <property type="entry name" value="GvpD_P-loop"/>
    <property type="match status" value="1"/>
</dbReference>
<dbReference type="SUPFAM" id="SSF52540">
    <property type="entry name" value="P-loop containing nucleoside triphosphate hydrolases"/>
    <property type="match status" value="1"/>
</dbReference>
<name>GVPD1_HALSA</name>
<organism>
    <name type="scientific">Halobacterium salinarum (strain ATCC 700922 / JCM 11081 / NRC-1)</name>
    <name type="common">Halobacterium halobium</name>
    <dbReference type="NCBI Taxonomy" id="64091"/>
    <lineage>
        <taxon>Archaea</taxon>
        <taxon>Methanobacteriati</taxon>
        <taxon>Methanobacteriota</taxon>
        <taxon>Stenosarchaea group</taxon>
        <taxon>Halobacteria</taxon>
        <taxon>Halobacteriales</taxon>
        <taxon>Halobacteriaceae</taxon>
        <taxon>Halobacterium</taxon>
        <taxon>Halobacterium salinarum NRC-34001</taxon>
    </lineage>
</organism>
<evidence type="ECO:0000250" key="1">
    <source>
        <dbReference type="UniProtKB" id="Q02229"/>
    </source>
</evidence>
<evidence type="ECO:0000255" key="2"/>
<evidence type="ECO:0000256" key="3">
    <source>
        <dbReference type="SAM" id="MobiDB-lite"/>
    </source>
</evidence>
<evidence type="ECO:0000269" key="4">
    <source>
    </source>
</evidence>
<evidence type="ECO:0000269" key="5">
    <source>
    </source>
</evidence>
<evidence type="ECO:0000269" key="6">
    <source>
    </source>
</evidence>
<evidence type="ECO:0000269" key="7">
    <source>
    </source>
</evidence>
<evidence type="ECO:0000269" key="8">
    <source>
    </source>
</evidence>
<evidence type="ECO:0000269" key="9">
    <source>
    </source>
</evidence>
<evidence type="ECO:0000269" key="10">
    <source>
    </source>
</evidence>
<evidence type="ECO:0000269" key="11">
    <source>
    </source>
</evidence>
<evidence type="ECO:0000303" key="12">
    <source>
    </source>
</evidence>
<evidence type="ECO:0000303" key="13">
    <source>
    </source>
</evidence>
<evidence type="ECO:0000303" key="14">
    <source>
    </source>
</evidence>
<evidence type="ECO:0000305" key="15"/>
<evidence type="ECO:0000305" key="16">
    <source>
    </source>
</evidence>
<evidence type="ECO:0000312" key="17">
    <source>
        <dbReference type="EMBL" id="AAA98195.1"/>
    </source>
</evidence>
<evidence type="ECO:0000312" key="18">
    <source>
        <dbReference type="EMBL" id="AAG20725.1"/>
    </source>
</evidence>
<evidence type="ECO:0000312" key="19">
    <source>
        <dbReference type="EMBL" id="CAA33435.1"/>
    </source>
</evidence>
<evidence type="ECO:0000312" key="20">
    <source>
        <dbReference type="EMBL" id="CAA39171.1"/>
    </source>
</evidence>
<reference evidence="19" key="1">
    <citation type="journal article" date="1989" name="Nucleic Acids Res.">
        <title>Analysis of insertion mutants reveals two new genes in the pNRC100 gas vesicle gene cluster of Halobacterium halobium.</title>
        <authorList>
            <person name="Jones J.G."/>
            <person name="Hackett N.R."/>
            <person name="Halladay J.T."/>
            <person name="Scothorn D.J."/>
            <person name="Yang C.-F."/>
            <person name="Ng W.-L."/>
            <person name="Dassarma S."/>
        </authorList>
    </citation>
    <scope>NUCLEOTIDE SEQUENCE [GENOMIC DNA]</scope>
    <scope>DISRUPTION PHENOTYPE</scope>
    <source>
        <strain>ATCC 700922 / JCM 11081 / NRC-1</strain>
        <plasmid>pNRC100</plasmid>
    </source>
</reference>
<reference evidence="17" key="2">
    <citation type="journal article" date="1991" name="Gene">
        <title>Structure and organization of the gas vesicle gene cluster on the Halobacterium halobium plasmid pNRC100.</title>
        <authorList>
            <person name="Jones J.G."/>
            <person name="Young D.C."/>
            <person name="Dassarma S."/>
        </authorList>
    </citation>
    <scope>NUCLEOTIDE SEQUENCE [GENOMIC DNA]</scope>
    <scope>INDUCTION</scope>
    <source>
        <strain>ATCC 700922 / JCM 11081 / NRC-1</strain>
        <plasmid>pNRC100</plasmid>
    </source>
</reference>
<reference evidence="20" key="3">
    <citation type="journal article" date="1991" name="Mol. Microbiol.">
        <title>A DNA region of 9 kbp contains all genes necessary for gas vesicle synthesis in halophilic archaebacteria.</title>
        <authorList>
            <person name="Horne M."/>
            <person name="Englert C."/>
            <person name="Wimmer C."/>
            <person name="Pfeifer F."/>
        </authorList>
    </citation>
    <scope>NUCLEOTIDE SEQUENCE [GENOMIC DNA]</scope>
    <scope>INDUCTION</scope>
    <scope>DISRUPTION PHENOTYPE</scope>
    <source>
        <strain>NRC-817</strain>
        <plasmid>pHH1</plasmid>
    </source>
</reference>
<reference key="4">
    <citation type="journal article" date="1998" name="Genome Res.">
        <title>Snapshot of a large dynamic replicon in a halophilic archaeon: megaplasmid or minichromosome?</title>
        <authorList>
            <person name="Ng W.V."/>
            <person name="Ciufo S.A."/>
            <person name="Smith T.M."/>
            <person name="Bumgarner R.E."/>
            <person name="Baskin D."/>
            <person name="Faust J."/>
            <person name="Hall B."/>
            <person name="Loretz C."/>
            <person name="Seto J."/>
            <person name="Slagel J."/>
            <person name="Hood L."/>
            <person name="DasSarma S."/>
        </authorList>
    </citation>
    <scope>NUCLEOTIDE SEQUENCE [LARGE SCALE GENOMIC DNA]</scope>
    <source>
        <strain>ATCC 700922 / JCM 11081 / NRC-1</strain>
        <plasmid>pNRC100</plasmid>
    </source>
</reference>
<reference evidence="18" key="5">
    <citation type="journal article" date="2000" name="Proc. Natl. Acad. Sci. U.S.A.">
        <title>Genome sequence of Halobacterium species NRC-1.</title>
        <authorList>
            <person name="Ng W.V."/>
            <person name="Kennedy S.P."/>
            <person name="Mahairas G.G."/>
            <person name="Berquist B."/>
            <person name="Pan M."/>
            <person name="Shukla H.D."/>
            <person name="Lasky S.R."/>
            <person name="Baliga N.S."/>
            <person name="Thorsson V."/>
            <person name="Sbrogna J."/>
            <person name="Swartzell S."/>
            <person name="Weir D."/>
            <person name="Hall J."/>
            <person name="Dahl T.A."/>
            <person name="Welti R."/>
            <person name="Goo Y.A."/>
            <person name="Leithauser B."/>
            <person name="Keller K."/>
            <person name="Cruz R."/>
            <person name="Danson M.J."/>
            <person name="Hough D.W."/>
            <person name="Maddocks D.G."/>
            <person name="Jablonski P.E."/>
            <person name="Krebs M.P."/>
            <person name="Angevine C.M."/>
            <person name="Dale H."/>
            <person name="Isenbarger T.A."/>
            <person name="Peck R.F."/>
            <person name="Pohlschroder M."/>
            <person name="Spudich J.L."/>
            <person name="Jung K.-H."/>
            <person name="Alam M."/>
            <person name="Freitas T."/>
            <person name="Hou S."/>
            <person name="Daniels C.J."/>
            <person name="Dennis P.P."/>
            <person name="Omer A.D."/>
            <person name="Ebhardt H."/>
            <person name="Lowe T.M."/>
            <person name="Liang P."/>
            <person name="Riley M."/>
            <person name="Hood L."/>
            <person name="DasSarma S."/>
        </authorList>
    </citation>
    <scope>NUCLEOTIDE SEQUENCE [LARGE SCALE GENOMIC DNA]</scope>
    <source>
        <strain>ATCC 700922 / JCM 11081 / NRC-1</strain>
        <plasmid>pNRC200</plasmid>
    </source>
</reference>
<reference key="6">
    <citation type="journal article" date="1992" name="Gene">
        <title>Genetic transformation of a halophilic archaebacterium with a gas vesicle gene cluster restores its ability to float.</title>
        <authorList>
            <person name="Halladay J.T."/>
            <person name="Ng W.L."/>
            <person name="DasSarma S."/>
        </authorList>
    </citation>
    <scope>FUNCTION</scope>
    <scope>GAS VESICLE PRODUCTION</scope>
    <source>
        <strain>ATCC 700922 / JCM 11081 / NRC-1</strain>
        <plasmid>pNRC100</plasmid>
    </source>
</reference>
<reference key="7">
    <citation type="journal article" date="1992" name="J. Mol. Biol.">
        <title>Three different but related gene clusters encoding gas vesicles in halophilic archaea.</title>
        <authorList>
            <person name="Englert C."/>
            <person name="Krueger K."/>
            <person name="Offner S."/>
            <person name="Pfeifer F."/>
        </authorList>
    </citation>
    <scope>GAS VESICLE GENE CLUSTER</scope>
    <source>
        <strain>NRC-817</strain>
        <plasmid>pHH1</plasmid>
    </source>
</reference>
<reference key="8">
    <citation type="journal article" date="1994" name="J. Bacteriol.">
        <title>Wild-type gas vesicle formation requires at least ten genes in the gvp gene cluster of Halobacterium halobium plasmid pNRC100.</title>
        <authorList>
            <person name="DasSarma S."/>
            <person name="Arora P."/>
            <person name="Lin F."/>
            <person name="Molinari E."/>
            <person name="Yin L.R."/>
        </authorList>
    </citation>
    <scope>DISRUPTION PHENOTYPE</scope>
    <source>
        <strain>ATCC 700922 / JCM 11081 / NRC-1</strain>
        <plasmid>pNRC100</plasmid>
    </source>
</reference>
<reference key="9">
    <citation type="journal article" date="1995" name="Mol. Microbiol.">
        <title>Complementation studies with the gas vesicle-encoding p-vac region of Halobacterium salinarium PHH1 reveal a regulatory role for the p-gvpDE genes.</title>
        <authorList>
            <person name="Offner S."/>
            <person name="Pfeifer F."/>
        </authorList>
    </citation>
    <scope>FUNCTION</scope>
    <scope>INDUCTION</scope>
    <scope>DISRUPTION PHENOTYPE</scope>
    <source>
        <strain>PHH1</strain>
    </source>
</reference>
<reference key="10">
    <citation type="journal article" date="1997" name="Microbiology">
        <title>Growth competition between Halobacterium salinarium strain PHH1 and mutants affected in gas vesicle synthesis.</title>
        <authorList>
            <person name="Beard S.J."/>
            <person name="Hayes P.K."/>
            <person name="Walsby A.E."/>
        </authorList>
    </citation>
    <scope>FUNCTION IN BUOYANCY</scope>
    <scope>POSSIBLE INDUCTION BY OXYGEN LIMITATION</scope>
    <source>
        <strain>PHH1</strain>
    </source>
</reference>
<reference key="11">
    <citation type="journal article" date="2011" name="J. Proteome Res.">
        <title>New structural proteins of Halobacterium salinarum gas vesicle revealed by comparative proteomics analysis.</title>
        <authorList>
            <person name="Chu L.J."/>
            <person name="Chen M.C."/>
            <person name="Setter J."/>
            <person name="Tsai Y.S."/>
            <person name="Yang H."/>
            <person name="Fang X."/>
            <person name="Ting Y.S."/>
            <person name="Shaffer S.A."/>
            <person name="Taylor G.K."/>
            <person name="von Haller P.D."/>
            <person name="Goodlett D.R."/>
            <person name="Ng W.V."/>
        </authorList>
    </citation>
    <scope>SUBCELLULAR LOCATION</scope>
    <scope>IDENTIFICATION BY MASS SPECTROMETRY</scope>
    <source>
        <strain>ATCC 700922 / JCM 11081 / NRC-1</strain>
    </source>
</reference>
<accession>P13043</accession>
<accession>Q9HI19</accession>
<gene>
    <name type="primary">gvpD11</name>
    <name evidence="13" type="synonym">gvpD</name>
    <name evidence="14" type="synonym">p-gvpD</name>
    <name type="ordered locus">VNG_5029G</name>
</gene>
<gene>
    <name evidence="13 18" type="primary">gvpD1</name>
    <name evidence="18" type="ordered locus">VNG_6028G</name>
</gene>
<proteinExistence type="evidence at protein level"/>
<geneLocation type="plasmid">
    <name>pNRC100</name>
</geneLocation>
<geneLocation type="plasmid">
    <name>pNRC200</name>
</geneLocation>
<geneLocation type="plasmid">
    <name>pHH1</name>
</geneLocation>
<comment type="function">
    <text evidence="1 9 10">Causes a decrease in the amount of GvpE protein (By similarity). The 5'-region of its promoter or mRNA has a repressive function on downstream genes (PubMed:7651141). Gas vesicles are hollow, gas filled proteinaceous nanostructures found in several microbial planktonic microorganisms. They allow positioning of halobacteria at the optimal depth for growth in the poorly aerated, shallow brine pools of their habitat (PubMed:33711860).</text>
</comment>
<comment type="function">
    <text evidence="4 5 10 11">Expression of a 9.5 kb p-vac DNA fragment containing 2 divergently transcribed regions (gvpD-gvpE-gvpF-gvpG-gvpH-gvpI-gvpJ-gvpK-gvpL-gvpM and gvpA-gvpC-gvpN-gvpO) allows H.volcanii to produce gas vesicles (PubMed:1404376, PubMed:7651141). A similar region restores gas vesicle production in H.halobium without the p-vac locus, but it still has the c-vac locus (PubMed:1398080, PubMed:8002589).</text>
</comment>
<comment type="subunit">
    <text evidence="1">Interacts with GvpE.</text>
</comment>
<comment type="subcellular location">
    <subcellularLocation>
        <location evidence="16">Cytoplasm</location>
    </subcellularLocation>
    <text evidence="15">Probably not part of the mature gas vesicle.</text>
</comment>
<comment type="induction">
    <text evidence="6 7 9 10">Transcribed divergently from the gvpA gene (PubMed:1864501). Maximally transcribed in late log phase, probably part of a gvpD1-gvpE1 operon (PubMed:1956294, PubMed:7651141). Gas vesicles appear earlier when grown in static culture, possibly due to O(2)-limitation (PubMed:33711860).</text>
</comment>
<comment type="disruption phenotype">
    <text evidence="7 8 10 11">Partially gas vesicle-deficient (PubMed:1956294, PubMed:2552415, PubMed:8002589). A double gvpD1-gvpE1 deletion is partially gas vesicle-deficient, still transcribes gvpA1 (PubMed:7651141).</text>
</comment>
<comment type="miscellaneous">
    <text evidence="5 7 9">Encoded in a 14-gene plasmid locus called p-vac which produces predominantly short, spindle-shaped gas vesicles during all stages of growth.</text>
</comment>
<comment type="similarity">
    <text evidence="15">Belongs to the gas vesicle GvpD family.</text>
</comment>
<feature type="chain" id="PRO_0000182675" description="Protein GvpD1">
    <location>
        <begin position="1"/>
        <end position="536"/>
    </location>
</feature>
<feature type="region of interest" description="Disordered" evidence="3">
    <location>
        <begin position="352"/>
        <end position="413"/>
    </location>
</feature>
<feature type="compositionally biased region" description="Polar residues" evidence="3">
    <location>
        <begin position="363"/>
        <end position="372"/>
    </location>
</feature>
<feature type="compositionally biased region" description="Low complexity" evidence="3">
    <location>
        <begin position="373"/>
        <end position="385"/>
    </location>
</feature>
<feature type="compositionally biased region" description="Basic and acidic residues" evidence="3">
    <location>
        <begin position="386"/>
        <end position="396"/>
    </location>
</feature>
<feature type="binding site" evidence="2">
    <location>
        <begin position="39"/>
        <end position="46"/>
    </location>
    <ligand>
        <name>ATP</name>
        <dbReference type="ChEBI" id="CHEBI:30616"/>
    </ligand>
</feature>